<accession>A7GCB9</accession>
<organism>
    <name type="scientific">Clostridium botulinum (strain Langeland / NCTC 10281 / Type F)</name>
    <dbReference type="NCBI Taxonomy" id="441772"/>
    <lineage>
        <taxon>Bacteria</taxon>
        <taxon>Bacillati</taxon>
        <taxon>Bacillota</taxon>
        <taxon>Clostridia</taxon>
        <taxon>Eubacteriales</taxon>
        <taxon>Clostridiaceae</taxon>
        <taxon>Clostridium</taxon>
    </lineage>
</organism>
<sequence length="563" mass="63970">MDYKNLVAERIKENTELEVDLIEKLIEIPPKKEMGDYAFPCFQLAKTFRKAPNLIAEELKEKINKEGFEKVVTVGPYLNFFVDKTILIKDVLEKVLSEKEKYGSSKVGEGKNVVVEYSSPNIAKPFHIGHLFTTAIGNALYKILSFEGYNCIGINHLGDWGTQFGKLISAYRRWVDEEALEKDAIGELLRIYVKFHEEAEKDPELEKEARLNFKNLEDGSKEETELWNRFKDLSLKEFNKVYDMLGIKFDSLAGESFYSDKMDAVVQEIDDKGLLVDSNGAKVVMLDEYNMPPCMIKKSDGATIYATRDLAAAIYRKKTYDFHKCIYVVGTPQALHFKQVFTTLKLMGHDWADDCKHVGFGLVKLANKKLSTRNGDVVFLEDLLNQSVEETLKIINEKNPNLKNKEDVAKKLGIGAVVFTYLKNNRERDIVFDWKEILSFDGETGPYVEYSYARGKSILRKAGELTGEADYSKLSSKEEFELAKLLGGFNDAIMNAIDKLEPAMVTRYIIEVAKAFNKFYNAHGILNAEDNDVKLARVKLVEATCQVIKNALNLLGIDVVEEM</sequence>
<feature type="chain" id="PRO_1000018017" description="Arginine--tRNA ligase">
    <location>
        <begin position="1"/>
        <end position="563"/>
    </location>
</feature>
<feature type="short sequence motif" description="'HIGH' region">
    <location>
        <begin position="120"/>
        <end position="130"/>
    </location>
</feature>
<protein>
    <recommendedName>
        <fullName evidence="1">Arginine--tRNA ligase</fullName>
        <ecNumber evidence="1">6.1.1.19</ecNumber>
    </recommendedName>
    <alternativeName>
        <fullName evidence="1">Arginyl-tRNA synthetase</fullName>
        <shortName evidence="1">ArgRS</shortName>
    </alternativeName>
</protein>
<dbReference type="EC" id="6.1.1.19" evidence="1"/>
<dbReference type="EMBL" id="CP000728">
    <property type="protein sequence ID" value="ABS40420.1"/>
    <property type="molecule type" value="Genomic_DNA"/>
</dbReference>
<dbReference type="RefSeq" id="WP_011987980.1">
    <property type="nucleotide sequence ID" value="NC_009699.1"/>
</dbReference>
<dbReference type="SMR" id="A7GCB9"/>
<dbReference type="KEGG" id="cbf:CLI_1163"/>
<dbReference type="HOGENOM" id="CLU_006406_6_1_9"/>
<dbReference type="Proteomes" id="UP000002410">
    <property type="component" value="Chromosome"/>
</dbReference>
<dbReference type="GO" id="GO:0005737">
    <property type="term" value="C:cytoplasm"/>
    <property type="evidence" value="ECO:0007669"/>
    <property type="project" value="UniProtKB-SubCell"/>
</dbReference>
<dbReference type="GO" id="GO:0004814">
    <property type="term" value="F:arginine-tRNA ligase activity"/>
    <property type="evidence" value="ECO:0007669"/>
    <property type="project" value="UniProtKB-UniRule"/>
</dbReference>
<dbReference type="GO" id="GO:0005524">
    <property type="term" value="F:ATP binding"/>
    <property type="evidence" value="ECO:0007669"/>
    <property type="project" value="UniProtKB-UniRule"/>
</dbReference>
<dbReference type="GO" id="GO:0006420">
    <property type="term" value="P:arginyl-tRNA aminoacylation"/>
    <property type="evidence" value="ECO:0007669"/>
    <property type="project" value="UniProtKB-UniRule"/>
</dbReference>
<dbReference type="CDD" id="cd07956">
    <property type="entry name" value="Anticodon_Ia_Arg"/>
    <property type="match status" value="1"/>
</dbReference>
<dbReference type="CDD" id="cd00671">
    <property type="entry name" value="ArgRS_core"/>
    <property type="match status" value="1"/>
</dbReference>
<dbReference type="FunFam" id="1.10.730.10:FF:000008">
    <property type="entry name" value="Arginine--tRNA ligase"/>
    <property type="match status" value="1"/>
</dbReference>
<dbReference type="FunFam" id="3.30.1360.70:FF:000005">
    <property type="entry name" value="Arginine--tRNA ligase"/>
    <property type="match status" value="1"/>
</dbReference>
<dbReference type="FunFam" id="3.40.50.620:FF:000116">
    <property type="entry name" value="Arginine--tRNA ligase"/>
    <property type="match status" value="1"/>
</dbReference>
<dbReference type="Gene3D" id="3.30.1360.70">
    <property type="entry name" value="Arginyl tRNA synthetase N-terminal domain"/>
    <property type="match status" value="1"/>
</dbReference>
<dbReference type="Gene3D" id="3.40.50.620">
    <property type="entry name" value="HUPs"/>
    <property type="match status" value="1"/>
</dbReference>
<dbReference type="Gene3D" id="1.10.730.10">
    <property type="entry name" value="Isoleucyl-tRNA Synthetase, Domain 1"/>
    <property type="match status" value="1"/>
</dbReference>
<dbReference type="HAMAP" id="MF_00123">
    <property type="entry name" value="Arg_tRNA_synth"/>
    <property type="match status" value="1"/>
</dbReference>
<dbReference type="InterPro" id="IPR001412">
    <property type="entry name" value="aa-tRNA-synth_I_CS"/>
</dbReference>
<dbReference type="InterPro" id="IPR001278">
    <property type="entry name" value="Arg-tRNA-ligase"/>
</dbReference>
<dbReference type="InterPro" id="IPR005148">
    <property type="entry name" value="Arg-tRNA-synth_N"/>
</dbReference>
<dbReference type="InterPro" id="IPR036695">
    <property type="entry name" value="Arg-tRNA-synth_N_sf"/>
</dbReference>
<dbReference type="InterPro" id="IPR035684">
    <property type="entry name" value="ArgRS_core"/>
</dbReference>
<dbReference type="InterPro" id="IPR008909">
    <property type="entry name" value="DALR_anticod-bd"/>
</dbReference>
<dbReference type="InterPro" id="IPR014729">
    <property type="entry name" value="Rossmann-like_a/b/a_fold"/>
</dbReference>
<dbReference type="InterPro" id="IPR009080">
    <property type="entry name" value="tRNAsynth_Ia_anticodon-bd"/>
</dbReference>
<dbReference type="NCBIfam" id="TIGR00456">
    <property type="entry name" value="argS"/>
    <property type="match status" value="1"/>
</dbReference>
<dbReference type="PANTHER" id="PTHR11956:SF5">
    <property type="entry name" value="ARGININE--TRNA LIGASE, CYTOPLASMIC"/>
    <property type="match status" value="1"/>
</dbReference>
<dbReference type="PANTHER" id="PTHR11956">
    <property type="entry name" value="ARGINYL-TRNA SYNTHETASE"/>
    <property type="match status" value="1"/>
</dbReference>
<dbReference type="Pfam" id="PF03485">
    <property type="entry name" value="Arg_tRNA_synt_N"/>
    <property type="match status" value="1"/>
</dbReference>
<dbReference type="Pfam" id="PF05746">
    <property type="entry name" value="DALR_1"/>
    <property type="match status" value="1"/>
</dbReference>
<dbReference type="Pfam" id="PF00750">
    <property type="entry name" value="tRNA-synt_1d"/>
    <property type="match status" value="1"/>
</dbReference>
<dbReference type="PRINTS" id="PR01038">
    <property type="entry name" value="TRNASYNTHARG"/>
</dbReference>
<dbReference type="SMART" id="SM01016">
    <property type="entry name" value="Arg_tRNA_synt_N"/>
    <property type="match status" value="1"/>
</dbReference>
<dbReference type="SMART" id="SM00836">
    <property type="entry name" value="DALR_1"/>
    <property type="match status" value="1"/>
</dbReference>
<dbReference type="SUPFAM" id="SSF47323">
    <property type="entry name" value="Anticodon-binding domain of a subclass of class I aminoacyl-tRNA synthetases"/>
    <property type="match status" value="1"/>
</dbReference>
<dbReference type="SUPFAM" id="SSF55190">
    <property type="entry name" value="Arginyl-tRNA synthetase (ArgRS), N-terminal 'additional' domain"/>
    <property type="match status" value="1"/>
</dbReference>
<dbReference type="SUPFAM" id="SSF52374">
    <property type="entry name" value="Nucleotidylyl transferase"/>
    <property type="match status" value="1"/>
</dbReference>
<dbReference type="PROSITE" id="PS00178">
    <property type="entry name" value="AA_TRNA_LIGASE_I"/>
    <property type="match status" value="1"/>
</dbReference>
<evidence type="ECO:0000255" key="1">
    <source>
        <dbReference type="HAMAP-Rule" id="MF_00123"/>
    </source>
</evidence>
<comment type="catalytic activity">
    <reaction evidence="1">
        <text>tRNA(Arg) + L-arginine + ATP = L-arginyl-tRNA(Arg) + AMP + diphosphate</text>
        <dbReference type="Rhea" id="RHEA:20301"/>
        <dbReference type="Rhea" id="RHEA-COMP:9658"/>
        <dbReference type="Rhea" id="RHEA-COMP:9673"/>
        <dbReference type="ChEBI" id="CHEBI:30616"/>
        <dbReference type="ChEBI" id="CHEBI:32682"/>
        <dbReference type="ChEBI" id="CHEBI:33019"/>
        <dbReference type="ChEBI" id="CHEBI:78442"/>
        <dbReference type="ChEBI" id="CHEBI:78513"/>
        <dbReference type="ChEBI" id="CHEBI:456215"/>
        <dbReference type="EC" id="6.1.1.19"/>
    </reaction>
</comment>
<comment type="subunit">
    <text evidence="1">Monomer.</text>
</comment>
<comment type="subcellular location">
    <subcellularLocation>
        <location evidence="1">Cytoplasm</location>
    </subcellularLocation>
</comment>
<comment type="similarity">
    <text evidence="1">Belongs to the class-I aminoacyl-tRNA synthetase family.</text>
</comment>
<name>SYR_CLOBL</name>
<keyword id="KW-0030">Aminoacyl-tRNA synthetase</keyword>
<keyword id="KW-0067">ATP-binding</keyword>
<keyword id="KW-0963">Cytoplasm</keyword>
<keyword id="KW-0436">Ligase</keyword>
<keyword id="KW-0547">Nucleotide-binding</keyword>
<keyword id="KW-0648">Protein biosynthesis</keyword>
<gene>
    <name evidence="1" type="primary">argS</name>
    <name type="ordered locus">CLI_1163</name>
</gene>
<proteinExistence type="inferred from homology"/>
<reference key="1">
    <citation type="submission" date="2007-06" db="EMBL/GenBank/DDBJ databases">
        <authorList>
            <person name="Brinkac L.M."/>
            <person name="Daugherty S."/>
            <person name="Dodson R.J."/>
            <person name="Madupu R."/>
            <person name="Brown J.L."/>
            <person name="Bruce D."/>
            <person name="Detter C."/>
            <person name="Munk C."/>
            <person name="Smith L.A."/>
            <person name="Smith T.J."/>
            <person name="White O."/>
            <person name="Brettin T.S."/>
        </authorList>
    </citation>
    <scope>NUCLEOTIDE SEQUENCE [LARGE SCALE GENOMIC DNA]</scope>
    <source>
        <strain>Langeland / NCTC 10281 / Type F</strain>
    </source>
</reference>